<feature type="chain" id="PRO_0000107346" description="Uncharacterized protein MJ1458">
    <location>
        <begin position="1"/>
        <end position="218"/>
    </location>
</feature>
<feature type="domain" description="ACT" evidence="1">
    <location>
        <begin position="4"/>
        <end position="83"/>
    </location>
</feature>
<organism>
    <name type="scientific">Methanocaldococcus jannaschii (strain ATCC 43067 / DSM 2661 / JAL-1 / JCM 10045 / NBRC 100440)</name>
    <name type="common">Methanococcus jannaschii</name>
    <dbReference type="NCBI Taxonomy" id="243232"/>
    <lineage>
        <taxon>Archaea</taxon>
        <taxon>Methanobacteriati</taxon>
        <taxon>Methanobacteriota</taxon>
        <taxon>Methanomada group</taxon>
        <taxon>Methanococci</taxon>
        <taxon>Methanococcales</taxon>
        <taxon>Methanocaldococcaceae</taxon>
        <taxon>Methanocaldococcus</taxon>
    </lineage>
</organism>
<dbReference type="EMBL" id="L77117">
    <property type="protein sequence ID" value="AAB99466.1"/>
    <property type="molecule type" value="Genomic_DNA"/>
</dbReference>
<dbReference type="PIR" id="A64482">
    <property type="entry name" value="A64482"/>
</dbReference>
<dbReference type="RefSeq" id="WP_010870978.1">
    <property type="nucleotide sequence ID" value="NC_000909.1"/>
</dbReference>
<dbReference type="SMR" id="Q58853"/>
<dbReference type="STRING" id="243232.MJ_1458"/>
<dbReference type="PaxDb" id="243232-MJ_1458"/>
<dbReference type="EnsemblBacteria" id="AAB99466">
    <property type="protein sequence ID" value="AAB99466"/>
    <property type="gene ID" value="MJ_1458"/>
</dbReference>
<dbReference type="GeneID" id="1452362"/>
<dbReference type="KEGG" id="mja:MJ_1458"/>
<dbReference type="eggNOG" id="arCOG00813">
    <property type="taxonomic scope" value="Archaea"/>
</dbReference>
<dbReference type="HOGENOM" id="CLU_1264587_0_0_2"/>
<dbReference type="InParanoid" id="Q58853"/>
<dbReference type="OrthoDB" id="146838at2157"/>
<dbReference type="PhylomeDB" id="Q58853"/>
<dbReference type="Proteomes" id="UP000000805">
    <property type="component" value="Chromosome"/>
</dbReference>
<dbReference type="CDD" id="cd04874">
    <property type="entry name" value="ACT_Af1403"/>
    <property type="match status" value="1"/>
</dbReference>
<dbReference type="Gene3D" id="3.30.70.260">
    <property type="match status" value="1"/>
</dbReference>
<dbReference type="Gene3D" id="3.40.50.10550">
    <property type="entry name" value="Hypothetical protein af1403, domain 2"/>
    <property type="match status" value="1"/>
</dbReference>
<dbReference type="InterPro" id="IPR045865">
    <property type="entry name" value="ACT-like_dom_sf"/>
</dbReference>
<dbReference type="InterPro" id="IPR002912">
    <property type="entry name" value="ACT_dom"/>
</dbReference>
<dbReference type="InterPro" id="IPR054480">
    <property type="entry name" value="AHAS_small-like_ACT"/>
</dbReference>
<dbReference type="InterPro" id="IPR011006">
    <property type="entry name" value="CheY-like_superfamily"/>
</dbReference>
<dbReference type="InterPro" id="IPR040537">
    <property type="entry name" value="DUF5612"/>
</dbReference>
<dbReference type="InterPro" id="IPR015832">
    <property type="entry name" value="UCP006363_ACT"/>
</dbReference>
<dbReference type="Pfam" id="PF22629">
    <property type="entry name" value="ACT_AHAS_ss"/>
    <property type="match status" value="1"/>
</dbReference>
<dbReference type="Pfam" id="PF18462">
    <property type="entry name" value="DUF5612"/>
    <property type="match status" value="1"/>
</dbReference>
<dbReference type="PIRSF" id="PIRSF006363">
    <property type="entry name" value="UCP006363_ACT"/>
    <property type="match status" value="1"/>
</dbReference>
<dbReference type="SUPFAM" id="SSF55021">
    <property type="entry name" value="ACT-like"/>
    <property type="match status" value="1"/>
</dbReference>
<dbReference type="SUPFAM" id="SSF52172">
    <property type="entry name" value="CheY-like"/>
    <property type="match status" value="1"/>
</dbReference>
<dbReference type="PROSITE" id="PS51671">
    <property type="entry name" value="ACT"/>
    <property type="match status" value="1"/>
</dbReference>
<protein>
    <recommendedName>
        <fullName>Uncharacterized protein MJ1458</fullName>
    </recommendedName>
</protein>
<keyword id="KW-1185">Reference proteome</keyword>
<gene>
    <name type="ordered locus">MJ1458</name>
</gene>
<sequence length="218" mass="23472">MEIGISIEAENKVGVLHKLTGILSELGGNITYTQQFIKDDGKIGFIYMEVEGIKDIEELKRRMESCECVKSFEIHSSLKKIYGKRVIIIGGGAQVAEVARGAISEADRHNIRGERISVDTLPIVGEENLYEAVKAVATLPRVGILVLAGSLMGGKITEAVKELKEKTGIPVISLKMFGSVPKVADLVVGDPLQAGVLAVMAIAETAKFDINKVKGRVL</sequence>
<reference key="1">
    <citation type="journal article" date="1996" name="Science">
        <title>Complete genome sequence of the methanogenic archaeon, Methanococcus jannaschii.</title>
        <authorList>
            <person name="Bult C.J."/>
            <person name="White O."/>
            <person name="Olsen G.J."/>
            <person name="Zhou L."/>
            <person name="Fleischmann R.D."/>
            <person name="Sutton G.G."/>
            <person name="Blake J.A."/>
            <person name="FitzGerald L.M."/>
            <person name="Clayton R.A."/>
            <person name="Gocayne J.D."/>
            <person name="Kerlavage A.R."/>
            <person name="Dougherty B.A."/>
            <person name="Tomb J.-F."/>
            <person name="Adams M.D."/>
            <person name="Reich C.I."/>
            <person name="Overbeek R."/>
            <person name="Kirkness E.F."/>
            <person name="Weinstock K.G."/>
            <person name="Merrick J.M."/>
            <person name="Glodek A."/>
            <person name="Scott J.L."/>
            <person name="Geoghagen N.S.M."/>
            <person name="Weidman J.F."/>
            <person name="Fuhrmann J.L."/>
            <person name="Nguyen D."/>
            <person name="Utterback T.R."/>
            <person name="Kelley J.M."/>
            <person name="Peterson J.D."/>
            <person name="Sadow P.W."/>
            <person name="Hanna M.C."/>
            <person name="Cotton M.D."/>
            <person name="Roberts K.M."/>
            <person name="Hurst M.A."/>
            <person name="Kaine B.P."/>
            <person name="Borodovsky M."/>
            <person name="Klenk H.-P."/>
            <person name="Fraser C.M."/>
            <person name="Smith H.O."/>
            <person name="Woese C.R."/>
            <person name="Venter J.C."/>
        </authorList>
    </citation>
    <scope>NUCLEOTIDE SEQUENCE [LARGE SCALE GENOMIC DNA]</scope>
    <source>
        <strain>ATCC 43067 / DSM 2661 / JAL-1 / JCM 10045 / NBRC 100440</strain>
    </source>
</reference>
<proteinExistence type="predicted"/>
<accession>Q58853</accession>
<name>Y1458_METJA</name>
<evidence type="ECO:0000255" key="1">
    <source>
        <dbReference type="PROSITE-ProRule" id="PRU01007"/>
    </source>
</evidence>